<evidence type="ECO:0000255" key="1">
    <source>
        <dbReference type="HAMAP-Rule" id="MF_00736"/>
    </source>
</evidence>
<evidence type="ECO:0000305" key="2"/>
<accession>A1V8B6</accession>
<organism>
    <name type="scientific">Burkholderia mallei (strain SAVP1)</name>
    <dbReference type="NCBI Taxonomy" id="320388"/>
    <lineage>
        <taxon>Bacteria</taxon>
        <taxon>Pseudomonadati</taxon>
        <taxon>Pseudomonadota</taxon>
        <taxon>Betaproteobacteria</taxon>
        <taxon>Burkholderiales</taxon>
        <taxon>Burkholderiaceae</taxon>
        <taxon>Burkholderia</taxon>
        <taxon>pseudomallei group</taxon>
    </lineage>
</organism>
<reference key="1">
    <citation type="journal article" date="2010" name="Genome Biol. Evol.">
        <title>Continuing evolution of Burkholderia mallei through genome reduction and large-scale rearrangements.</title>
        <authorList>
            <person name="Losada L."/>
            <person name="Ronning C.M."/>
            <person name="DeShazer D."/>
            <person name="Woods D."/>
            <person name="Fedorova N."/>
            <person name="Kim H.S."/>
            <person name="Shabalina S.A."/>
            <person name="Pearson T.R."/>
            <person name="Brinkac L."/>
            <person name="Tan P."/>
            <person name="Nandi T."/>
            <person name="Crabtree J."/>
            <person name="Badger J."/>
            <person name="Beckstrom-Sternberg S."/>
            <person name="Saqib M."/>
            <person name="Schutzer S.E."/>
            <person name="Keim P."/>
            <person name="Nierman W.C."/>
        </authorList>
    </citation>
    <scope>NUCLEOTIDE SEQUENCE [LARGE SCALE GENOMIC DNA]</scope>
    <source>
        <strain>SAVP1</strain>
    </source>
</reference>
<keyword id="KW-0488">Methylation</keyword>
<keyword id="KW-0687">Ribonucleoprotein</keyword>
<keyword id="KW-0689">Ribosomal protein</keyword>
<keyword id="KW-0694">RNA-binding</keyword>
<keyword id="KW-0699">rRNA-binding</keyword>
<dbReference type="EMBL" id="CP000526">
    <property type="protein sequence ID" value="ABM51471.1"/>
    <property type="molecule type" value="Genomic_DNA"/>
</dbReference>
<dbReference type="RefSeq" id="WP_004198368.1">
    <property type="nucleotide sequence ID" value="NC_008785.1"/>
</dbReference>
<dbReference type="SMR" id="A1V8B6"/>
<dbReference type="GeneID" id="93061845"/>
<dbReference type="KEGG" id="bmv:BMASAVP1_A3182"/>
<dbReference type="HOGENOM" id="CLU_074237_2_0_4"/>
<dbReference type="GO" id="GO:0022625">
    <property type="term" value="C:cytosolic large ribosomal subunit"/>
    <property type="evidence" value="ECO:0007669"/>
    <property type="project" value="TreeGrafter"/>
</dbReference>
<dbReference type="GO" id="GO:0070180">
    <property type="term" value="F:large ribosomal subunit rRNA binding"/>
    <property type="evidence" value="ECO:0007669"/>
    <property type="project" value="UniProtKB-UniRule"/>
</dbReference>
<dbReference type="GO" id="GO:0003735">
    <property type="term" value="F:structural constituent of ribosome"/>
    <property type="evidence" value="ECO:0007669"/>
    <property type="project" value="InterPro"/>
</dbReference>
<dbReference type="GO" id="GO:0006412">
    <property type="term" value="P:translation"/>
    <property type="evidence" value="ECO:0007669"/>
    <property type="project" value="UniProtKB-UniRule"/>
</dbReference>
<dbReference type="CDD" id="cd00349">
    <property type="entry name" value="Ribosomal_L11"/>
    <property type="match status" value="1"/>
</dbReference>
<dbReference type="FunFam" id="1.10.10.250:FF:000001">
    <property type="entry name" value="50S ribosomal protein L11"/>
    <property type="match status" value="1"/>
</dbReference>
<dbReference type="FunFam" id="3.30.1550.10:FF:000001">
    <property type="entry name" value="50S ribosomal protein L11"/>
    <property type="match status" value="1"/>
</dbReference>
<dbReference type="Gene3D" id="1.10.10.250">
    <property type="entry name" value="Ribosomal protein L11, C-terminal domain"/>
    <property type="match status" value="1"/>
</dbReference>
<dbReference type="Gene3D" id="3.30.1550.10">
    <property type="entry name" value="Ribosomal protein L11/L12, N-terminal domain"/>
    <property type="match status" value="1"/>
</dbReference>
<dbReference type="HAMAP" id="MF_00736">
    <property type="entry name" value="Ribosomal_uL11"/>
    <property type="match status" value="1"/>
</dbReference>
<dbReference type="InterPro" id="IPR000911">
    <property type="entry name" value="Ribosomal_uL11"/>
</dbReference>
<dbReference type="InterPro" id="IPR006519">
    <property type="entry name" value="Ribosomal_uL11_bac-typ"/>
</dbReference>
<dbReference type="InterPro" id="IPR020783">
    <property type="entry name" value="Ribosomal_uL11_C"/>
</dbReference>
<dbReference type="InterPro" id="IPR036769">
    <property type="entry name" value="Ribosomal_uL11_C_sf"/>
</dbReference>
<dbReference type="InterPro" id="IPR020785">
    <property type="entry name" value="Ribosomal_uL11_CS"/>
</dbReference>
<dbReference type="InterPro" id="IPR020784">
    <property type="entry name" value="Ribosomal_uL11_N"/>
</dbReference>
<dbReference type="InterPro" id="IPR036796">
    <property type="entry name" value="Ribosomal_uL11_N_sf"/>
</dbReference>
<dbReference type="NCBIfam" id="TIGR01632">
    <property type="entry name" value="L11_bact"/>
    <property type="match status" value="1"/>
</dbReference>
<dbReference type="PANTHER" id="PTHR11661">
    <property type="entry name" value="60S RIBOSOMAL PROTEIN L12"/>
    <property type="match status" value="1"/>
</dbReference>
<dbReference type="PANTHER" id="PTHR11661:SF1">
    <property type="entry name" value="LARGE RIBOSOMAL SUBUNIT PROTEIN UL11M"/>
    <property type="match status" value="1"/>
</dbReference>
<dbReference type="Pfam" id="PF00298">
    <property type="entry name" value="Ribosomal_L11"/>
    <property type="match status" value="1"/>
</dbReference>
<dbReference type="Pfam" id="PF03946">
    <property type="entry name" value="Ribosomal_L11_N"/>
    <property type="match status" value="1"/>
</dbReference>
<dbReference type="SMART" id="SM00649">
    <property type="entry name" value="RL11"/>
    <property type="match status" value="1"/>
</dbReference>
<dbReference type="SUPFAM" id="SSF54747">
    <property type="entry name" value="Ribosomal L11/L12e N-terminal domain"/>
    <property type="match status" value="1"/>
</dbReference>
<dbReference type="SUPFAM" id="SSF46906">
    <property type="entry name" value="Ribosomal protein L11, C-terminal domain"/>
    <property type="match status" value="1"/>
</dbReference>
<dbReference type="PROSITE" id="PS00359">
    <property type="entry name" value="RIBOSOMAL_L11"/>
    <property type="match status" value="1"/>
</dbReference>
<protein>
    <recommendedName>
        <fullName evidence="1">Large ribosomal subunit protein uL11</fullName>
    </recommendedName>
    <alternativeName>
        <fullName evidence="2">50S ribosomal protein L11</fullName>
    </alternativeName>
</protein>
<feature type="chain" id="PRO_1000046153" description="Large ribosomal subunit protein uL11">
    <location>
        <begin position="1"/>
        <end position="143"/>
    </location>
</feature>
<comment type="function">
    <text evidence="1">Forms part of the ribosomal stalk which helps the ribosome interact with GTP-bound translation factors.</text>
</comment>
<comment type="subunit">
    <text evidence="1">Part of the ribosomal stalk of the 50S ribosomal subunit. Interacts with L10 and the large rRNA to form the base of the stalk. L10 forms an elongated spine to which L12 dimers bind in a sequential fashion forming a multimeric L10(L12)X complex.</text>
</comment>
<comment type="PTM">
    <text evidence="1">One or more lysine residues are methylated.</text>
</comment>
<comment type="similarity">
    <text evidence="1">Belongs to the universal ribosomal protein uL11 family.</text>
</comment>
<name>RL11_BURMS</name>
<gene>
    <name evidence="1" type="primary">rplK</name>
    <name type="ordered locus">BMASAVP1_A3182</name>
</gene>
<sequence>MAKKIVGFIKLQIPAGKANPSPPVGPALGQRGLNIMEFCKAFNAQTQGMEPGLPVPVVITAYADKSFTFVMKTPPATVLIKKAAKVDKGSSKPHTDKVGKITRAQAEEIAKTKMPDLTAADLDAAVRTIAGSARSMGITVEGV</sequence>
<proteinExistence type="inferred from homology"/>